<accession>B9JFD7</accession>
<reference key="1">
    <citation type="journal article" date="2009" name="J. Bacteriol.">
        <title>Genome sequences of three Agrobacterium biovars help elucidate the evolution of multichromosome genomes in bacteria.</title>
        <authorList>
            <person name="Slater S.C."/>
            <person name="Goldman B.S."/>
            <person name="Goodner B."/>
            <person name="Setubal J.C."/>
            <person name="Farrand S.K."/>
            <person name="Nester E.W."/>
            <person name="Burr T.J."/>
            <person name="Banta L."/>
            <person name="Dickerman A.W."/>
            <person name="Paulsen I."/>
            <person name="Otten L."/>
            <person name="Suen G."/>
            <person name="Welch R."/>
            <person name="Almeida N.F."/>
            <person name="Arnold F."/>
            <person name="Burton O.T."/>
            <person name="Du Z."/>
            <person name="Ewing A."/>
            <person name="Godsy E."/>
            <person name="Heisel S."/>
            <person name="Houmiel K.L."/>
            <person name="Jhaveri J."/>
            <person name="Lu J."/>
            <person name="Miller N.M."/>
            <person name="Norton S."/>
            <person name="Chen Q."/>
            <person name="Phoolcharoen W."/>
            <person name="Ohlin V."/>
            <person name="Ondrusek D."/>
            <person name="Pride N."/>
            <person name="Stricklin S.L."/>
            <person name="Sun J."/>
            <person name="Wheeler C."/>
            <person name="Wilson L."/>
            <person name="Zhu H."/>
            <person name="Wood D.W."/>
        </authorList>
    </citation>
    <scope>NUCLEOTIDE SEQUENCE [LARGE SCALE GENOMIC DNA]</scope>
    <source>
        <strain>K84 / ATCC BAA-868</strain>
    </source>
</reference>
<name>TRPD_RHIR8</name>
<evidence type="ECO:0000255" key="1">
    <source>
        <dbReference type="HAMAP-Rule" id="MF_00211"/>
    </source>
</evidence>
<proteinExistence type="inferred from homology"/>
<organism>
    <name type="scientific">Rhizobium rhizogenes (strain K84 / ATCC BAA-868)</name>
    <name type="common">Agrobacterium radiobacter</name>
    <dbReference type="NCBI Taxonomy" id="311403"/>
    <lineage>
        <taxon>Bacteria</taxon>
        <taxon>Pseudomonadati</taxon>
        <taxon>Pseudomonadota</taxon>
        <taxon>Alphaproteobacteria</taxon>
        <taxon>Hyphomicrobiales</taxon>
        <taxon>Rhizobiaceae</taxon>
        <taxon>Rhizobium/Agrobacterium group</taxon>
        <taxon>Rhizobium</taxon>
    </lineage>
</organism>
<dbReference type="EC" id="2.4.2.18" evidence="1"/>
<dbReference type="EMBL" id="CP000628">
    <property type="protein sequence ID" value="ACM26627.1"/>
    <property type="molecule type" value="Genomic_DNA"/>
</dbReference>
<dbReference type="RefSeq" id="WP_012651485.1">
    <property type="nucleotide sequence ID" value="NC_011985.1"/>
</dbReference>
<dbReference type="SMR" id="B9JFD7"/>
<dbReference type="STRING" id="311403.Arad_2437"/>
<dbReference type="GeneID" id="86848485"/>
<dbReference type="KEGG" id="ara:Arad_2437"/>
<dbReference type="eggNOG" id="COG0547">
    <property type="taxonomic scope" value="Bacteria"/>
</dbReference>
<dbReference type="HOGENOM" id="CLU_034315_2_1_5"/>
<dbReference type="UniPathway" id="UPA00035">
    <property type="reaction ID" value="UER00041"/>
</dbReference>
<dbReference type="Proteomes" id="UP000001600">
    <property type="component" value="Chromosome 1"/>
</dbReference>
<dbReference type="GO" id="GO:0005829">
    <property type="term" value="C:cytosol"/>
    <property type="evidence" value="ECO:0007669"/>
    <property type="project" value="TreeGrafter"/>
</dbReference>
<dbReference type="GO" id="GO:0004048">
    <property type="term" value="F:anthranilate phosphoribosyltransferase activity"/>
    <property type="evidence" value="ECO:0007669"/>
    <property type="project" value="UniProtKB-UniRule"/>
</dbReference>
<dbReference type="GO" id="GO:0000287">
    <property type="term" value="F:magnesium ion binding"/>
    <property type="evidence" value="ECO:0007669"/>
    <property type="project" value="UniProtKB-UniRule"/>
</dbReference>
<dbReference type="GO" id="GO:0000162">
    <property type="term" value="P:L-tryptophan biosynthetic process"/>
    <property type="evidence" value="ECO:0007669"/>
    <property type="project" value="UniProtKB-UniRule"/>
</dbReference>
<dbReference type="FunFam" id="3.40.1030.10:FF:000002">
    <property type="entry name" value="Anthranilate phosphoribosyltransferase"/>
    <property type="match status" value="1"/>
</dbReference>
<dbReference type="Gene3D" id="3.40.1030.10">
    <property type="entry name" value="Nucleoside phosphorylase/phosphoribosyltransferase catalytic domain"/>
    <property type="match status" value="1"/>
</dbReference>
<dbReference type="Gene3D" id="1.20.970.10">
    <property type="entry name" value="Transferase, Pyrimidine Nucleoside Phosphorylase, Chain C"/>
    <property type="match status" value="1"/>
</dbReference>
<dbReference type="HAMAP" id="MF_00211">
    <property type="entry name" value="TrpD"/>
    <property type="match status" value="1"/>
</dbReference>
<dbReference type="InterPro" id="IPR005940">
    <property type="entry name" value="Anthranilate_Pribosyl_Tfrase"/>
</dbReference>
<dbReference type="InterPro" id="IPR000312">
    <property type="entry name" value="Glycosyl_Trfase_fam3"/>
</dbReference>
<dbReference type="InterPro" id="IPR017459">
    <property type="entry name" value="Glycosyl_Trfase_fam3_N_dom"/>
</dbReference>
<dbReference type="InterPro" id="IPR036320">
    <property type="entry name" value="Glycosyl_Trfase_fam3_N_dom_sf"/>
</dbReference>
<dbReference type="InterPro" id="IPR035902">
    <property type="entry name" value="Nuc_phospho_transferase"/>
</dbReference>
<dbReference type="NCBIfam" id="TIGR01245">
    <property type="entry name" value="trpD"/>
    <property type="match status" value="1"/>
</dbReference>
<dbReference type="PANTHER" id="PTHR43285">
    <property type="entry name" value="ANTHRANILATE PHOSPHORIBOSYLTRANSFERASE"/>
    <property type="match status" value="1"/>
</dbReference>
<dbReference type="PANTHER" id="PTHR43285:SF2">
    <property type="entry name" value="ANTHRANILATE PHOSPHORIBOSYLTRANSFERASE"/>
    <property type="match status" value="1"/>
</dbReference>
<dbReference type="Pfam" id="PF02885">
    <property type="entry name" value="Glycos_trans_3N"/>
    <property type="match status" value="1"/>
</dbReference>
<dbReference type="Pfam" id="PF00591">
    <property type="entry name" value="Glycos_transf_3"/>
    <property type="match status" value="1"/>
</dbReference>
<dbReference type="SUPFAM" id="SSF52418">
    <property type="entry name" value="Nucleoside phosphorylase/phosphoribosyltransferase catalytic domain"/>
    <property type="match status" value="1"/>
</dbReference>
<dbReference type="SUPFAM" id="SSF47648">
    <property type="entry name" value="Nucleoside phosphorylase/phosphoribosyltransferase N-terminal domain"/>
    <property type="match status" value="1"/>
</dbReference>
<keyword id="KW-0028">Amino-acid biosynthesis</keyword>
<keyword id="KW-0057">Aromatic amino acid biosynthesis</keyword>
<keyword id="KW-0328">Glycosyltransferase</keyword>
<keyword id="KW-0460">Magnesium</keyword>
<keyword id="KW-0479">Metal-binding</keyword>
<keyword id="KW-0808">Transferase</keyword>
<keyword id="KW-0822">Tryptophan biosynthesis</keyword>
<comment type="function">
    <text evidence="1">Catalyzes the transfer of the phosphoribosyl group of 5-phosphorylribose-1-pyrophosphate (PRPP) to anthranilate to yield N-(5'-phosphoribosyl)-anthranilate (PRA).</text>
</comment>
<comment type="catalytic activity">
    <reaction evidence="1">
        <text>N-(5-phospho-beta-D-ribosyl)anthranilate + diphosphate = 5-phospho-alpha-D-ribose 1-diphosphate + anthranilate</text>
        <dbReference type="Rhea" id="RHEA:11768"/>
        <dbReference type="ChEBI" id="CHEBI:16567"/>
        <dbReference type="ChEBI" id="CHEBI:18277"/>
        <dbReference type="ChEBI" id="CHEBI:33019"/>
        <dbReference type="ChEBI" id="CHEBI:58017"/>
        <dbReference type="EC" id="2.4.2.18"/>
    </reaction>
</comment>
<comment type="cofactor">
    <cofactor evidence="1">
        <name>Mg(2+)</name>
        <dbReference type="ChEBI" id="CHEBI:18420"/>
    </cofactor>
    <text evidence="1">Binds 2 magnesium ions per monomer.</text>
</comment>
<comment type="pathway">
    <text evidence="1">Amino-acid biosynthesis; L-tryptophan biosynthesis; L-tryptophan from chorismate: step 2/5.</text>
</comment>
<comment type="subunit">
    <text evidence="1">Homodimer.</text>
</comment>
<comment type="similarity">
    <text evidence="1">Belongs to the anthranilate phosphoribosyltransferase family.</text>
</comment>
<protein>
    <recommendedName>
        <fullName evidence="1">Anthranilate phosphoribosyltransferase</fullName>
        <ecNumber evidence="1">2.4.2.18</ecNumber>
    </recommendedName>
</protein>
<sequence length="338" mass="35095">MAELKPFLAKVANREVLTRDEARQAFDILMSGEATPSQIGAFLMALRVRGETVDEIVGAVTAMRAKMLPVEAPADAIDIVGTGGDGFGTYNISTLAAFIVAGAGVPVAKHGNRAQSSKAGTADTQSVLGIKLDIGPEVIARCIREAGIGFMFAQLHHSSMRHVGPSRVELGTRTIFNLLGPLANPAGARRQLLGVFAPQWVVPLAEVLKDLNAESVWVVHGNGLDEITTTGTTSVAALEDGKIRTFELTPADFGLAHADLADLKGGDGIANAAALRAVLSGEKNAYRDISLANAAASLVIAGKAETLHDGMKLAAQSLDSGATAAALEKLIAVSNDEE</sequence>
<feature type="chain" id="PRO_1000198795" description="Anthranilate phosphoribosyltransferase">
    <location>
        <begin position="1"/>
        <end position="338"/>
    </location>
</feature>
<feature type="binding site" evidence="1">
    <location>
        <position position="81"/>
    </location>
    <ligand>
        <name>5-phospho-alpha-D-ribose 1-diphosphate</name>
        <dbReference type="ChEBI" id="CHEBI:58017"/>
    </ligand>
</feature>
<feature type="binding site" evidence="1">
    <location>
        <position position="81"/>
    </location>
    <ligand>
        <name>anthranilate</name>
        <dbReference type="ChEBI" id="CHEBI:16567"/>
        <label>1</label>
    </ligand>
</feature>
<feature type="binding site" evidence="1">
    <location>
        <begin position="84"/>
        <end position="85"/>
    </location>
    <ligand>
        <name>5-phospho-alpha-D-ribose 1-diphosphate</name>
        <dbReference type="ChEBI" id="CHEBI:58017"/>
    </ligand>
</feature>
<feature type="binding site" evidence="1">
    <location>
        <position position="89"/>
    </location>
    <ligand>
        <name>5-phospho-alpha-D-ribose 1-diphosphate</name>
        <dbReference type="ChEBI" id="CHEBI:58017"/>
    </ligand>
</feature>
<feature type="binding site" evidence="1">
    <location>
        <begin position="91"/>
        <end position="94"/>
    </location>
    <ligand>
        <name>5-phospho-alpha-D-ribose 1-diphosphate</name>
        <dbReference type="ChEBI" id="CHEBI:58017"/>
    </ligand>
</feature>
<feature type="binding site" evidence="1">
    <location>
        <position position="93"/>
    </location>
    <ligand>
        <name>Mg(2+)</name>
        <dbReference type="ChEBI" id="CHEBI:18420"/>
        <label>1</label>
    </ligand>
</feature>
<feature type="binding site" evidence="1">
    <location>
        <begin position="109"/>
        <end position="117"/>
    </location>
    <ligand>
        <name>5-phospho-alpha-D-ribose 1-diphosphate</name>
        <dbReference type="ChEBI" id="CHEBI:58017"/>
    </ligand>
</feature>
<feature type="binding site" evidence="1">
    <location>
        <position position="112"/>
    </location>
    <ligand>
        <name>anthranilate</name>
        <dbReference type="ChEBI" id="CHEBI:16567"/>
        <label>1</label>
    </ligand>
</feature>
<feature type="binding site" evidence="1">
    <location>
        <position position="121"/>
    </location>
    <ligand>
        <name>5-phospho-alpha-D-ribose 1-diphosphate</name>
        <dbReference type="ChEBI" id="CHEBI:58017"/>
    </ligand>
</feature>
<feature type="binding site" evidence="1">
    <location>
        <position position="167"/>
    </location>
    <ligand>
        <name>anthranilate</name>
        <dbReference type="ChEBI" id="CHEBI:16567"/>
        <label>2</label>
    </ligand>
</feature>
<feature type="binding site" evidence="1">
    <location>
        <position position="225"/>
    </location>
    <ligand>
        <name>Mg(2+)</name>
        <dbReference type="ChEBI" id="CHEBI:18420"/>
        <label>2</label>
    </ligand>
</feature>
<feature type="binding site" evidence="1">
    <location>
        <position position="226"/>
    </location>
    <ligand>
        <name>Mg(2+)</name>
        <dbReference type="ChEBI" id="CHEBI:18420"/>
        <label>1</label>
    </ligand>
</feature>
<feature type="binding site" evidence="1">
    <location>
        <position position="226"/>
    </location>
    <ligand>
        <name>Mg(2+)</name>
        <dbReference type="ChEBI" id="CHEBI:18420"/>
        <label>2</label>
    </ligand>
</feature>
<gene>
    <name evidence="1" type="primary">trpD</name>
    <name type="ordered locus">Arad_2437</name>
</gene>